<keyword id="KW-0028">Amino-acid biosynthesis</keyword>
<keyword id="KW-0067">ATP-binding</keyword>
<keyword id="KW-0963">Cytoplasm</keyword>
<keyword id="KW-0368">Histidine biosynthesis</keyword>
<keyword id="KW-0378">Hydrolase</keyword>
<keyword id="KW-0511">Multifunctional enzyme</keyword>
<keyword id="KW-0547">Nucleotide-binding</keyword>
<keyword id="KW-1185">Reference proteome</keyword>
<accession>Q9S5G3</accession>
<evidence type="ECO:0000305" key="1"/>
<gene>
    <name type="primary">hisI</name>
    <name type="synonym">hisIE</name>
    <name type="ordered locus">Z3188</name>
    <name type="ordered locus">ECs2827</name>
</gene>
<reference key="1">
    <citation type="journal article" date="1999" name="Microb. Pathog.">
        <title>Analysis of the genes responsible for the O-antigen synthesis in enterohaemorrhagic Escherichia coli O157.</title>
        <authorList>
            <person name="Shimizu T."/>
            <person name="Yamasaki S."/>
            <person name="Tsukamoto T."/>
            <person name="Takeda Y."/>
        </authorList>
    </citation>
    <scope>NUCLEOTIDE SEQUENCE [GENOMIC DNA]</scope>
    <source>
        <strain>O157:H- / 184 / EHEC</strain>
    </source>
</reference>
<reference key="2">
    <citation type="journal article" date="2001" name="Nature">
        <title>Genome sequence of enterohaemorrhagic Escherichia coli O157:H7.</title>
        <authorList>
            <person name="Perna N.T."/>
            <person name="Plunkett G. III"/>
            <person name="Burland V."/>
            <person name="Mau B."/>
            <person name="Glasner J.D."/>
            <person name="Rose D.J."/>
            <person name="Mayhew G.F."/>
            <person name="Evans P.S."/>
            <person name="Gregor J."/>
            <person name="Kirkpatrick H.A."/>
            <person name="Posfai G."/>
            <person name="Hackett J."/>
            <person name="Klink S."/>
            <person name="Boutin A."/>
            <person name="Shao Y."/>
            <person name="Miller L."/>
            <person name="Grotbeck E.J."/>
            <person name="Davis N.W."/>
            <person name="Lim A."/>
            <person name="Dimalanta E.T."/>
            <person name="Potamousis K."/>
            <person name="Apodaca J."/>
            <person name="Anantharaman T.S."/>
            <person name="Lin J."/>
            <person name="Yen G."/>
            <person name="Schwartz D.C."/>
            <person name="Welch R.A."/>
            <person name="Blattner F.R."/>
        </authorList>
    </citation>
    <scope>NUCLEOTIDE SEQUENCE [LARGE SCALE GENOMIC DNA]</scope>
    <source>
        <strain>O157:H7 / EDL933 / ATCC 700927 / EHEC</strain>
    </source>
</reference>
<reference key="3">
    <citation type="journal article" date="2001" name="DNA Res.">
        <title>Complete genome sequence of enterohemorrhagic Escherichia coli O157:H7 and genomic comparison with a laboratory strain K-12.</title>
        <authorList>
            <person name="Hayashi T."/>
            <person name="Makino K."/>
            <person name="Ohnishi M."/>
            <person name="Kurokawa K."/>
            <person name="Ishii K."/>
            <person name="Yokoyama K."/>
            <person name="Han C.-G."/>
            <person name="Ohtsubo E."/>
            <person name="Nakayama K."/>
            <person name="Murata T."/>
            <person name="Tanaka M."/>
            <person name="Tobe T."/>
            <person name="Iida T."/>
            <person name="Takami H."/>
            <person name="Honda T."/>
            <person name="Sasakawa C."/>
            <person name="Ogasawara N."/>
            <person name="Yasunaga T."/>
            <person name="Kuhara S."/>
            <person name="Shiba T."/>
            <person name="Hattori M."/>
            <person name="Shinagawa H."/>
        </authorList>
    </citation>
    <scope>NUCLEOTIDE SEQUENCE [LARGE SCALE GENOMIC DNA]</scope>
    <source>
        <strain>O157:H7 / Sakai / RIMD 0509952 / EHEC</strain>
    </source>
</reference>
<feature type="chain" id="PRO_0000136413" description="Histidine biosynthesis bifunctional protein HisIE">
    <location>
        <begin position="1"/>
        <end position="203"/>
    </location>
</feature>
<feature type="region of interest" description="Phosphoribosyl-AMP cyclohydrolase">
    <location>
        <begin position="1"/>
        <end position="114"/>
    </location>
</feature>
<feature type="region of interest" description="Phosphoribosyl-ATP pyrophosphohydrolase">
    <location>
        <begin position="115"/>
        <end position="203"/>
    </location>
</feature>
<name>HIS2_ECO57</name>
<proteinExistence type="inferred from homology"/>
<organism>
    <name type="scientific">Escherichia coli O157:H7</name>
    <dbReference type="NCBI Taxonomy" id="83334"/>
    <lineage>
        <taxon>Bacteria</taxon>
        <taxon>Pseudomonadati</taxon>
        <taxon>Pseudomonadota</taxon>
        <taxon>Gammaproteobacteria</taxon>
        <taxon>Enterobacterales</taxon>
        <taxon>Enterobacteriaceae</taxon>
        <taxon>Escherichia</taxon>
    </lineage>
</organism>
<comment type="catalytic activity">
    <reaction>
        <text>1-(5-phospho-beta-D-ribosyl)-ATP + H2O = 1-(5-phospho-beta-D-ribosyl)-5'-AMP + diphosphate + H(+)</text>
        <dbReference type="Rhea" id="RHEA:22828"/>
        <dbReference type="ChEBI" id="CHEBI:15377"/>
        <dbReference type="ChEBI" id="CHEBI:15378"/>
        <dbReference type="ChEBI" id="CHEBI:33019"/>
        <dbReference type="ChEBI" id="CHEBI:59457"/>
        <dbReference type="ChEBI" id="CHEBI:73183"/>
        <dbReference type="EC" id="3.6.1.31"/>
    </reaction>
</comment>
<comment type="catalytic activity">
    <reaction>
        <text>1-(5-phospho-beta-D-ribosyl)-5'-AMP + H2O = 1-(5-phospho-beta-D-ribosyl)-5-[(5-phospho-beta-D-ribosylamino)methylideneamino]imidazole-4-carboxamide</text>
        <dbReference type="Rhea" id="RHEA:20049"/>
        <dbReference type="ChEBI" id="CHEBI:15377"/>
        <dbReference type="ChEBI" id="CHEBI:58435"/>
        <dbReference type="ChEBI" id="CHEBI:59457"/>
        <dbReference type="EC" id="3.5.4.19"/>
    </reaction>
</comment>
<comment type="pathway">
    <text>Amino-acid biosynthesis; L-histidine biosynthesis; L-histidine from 5-phospho-alpha-D-ribose 1-diphosphate: step 2/9.</text>
</comment>
<comment type="pathway">
    <text>Amino-acid biosynthesis; L-histidine biosynthesis; L-histidine from 5-phospho-alpha-D-ribose 1-diphosphate: step 3/9.</text>
</comment>
<comment type="subcellular location">
    <subcellularLocation>
        <location>Cytoplasm</location>
    </subcellularLocation>
</comment>
<comment type="similarity">
    <text evidence="1">In the N-terminal section; belongs to the PRA-CH family.</text>
</comment>
<comment type="similarity">
    <text evidence="1">In the C-terminal section; belongs to the PRA-PH family.</text>
</comment>
<sequence length="203" mass="22841">MLTEQQRRELDWEKTDGLMPVIVQHAVSGEVLMLGYMNPEALDKTIESGKVTFFSRTKQRLWTKGETSGNFLNVVNIAPDCDNDTLLVLANPIGPTCHKGTSSCFGDTAHQWLFLYQLEQLLAERKSADPETSYTAKLYASGTKRIAQKVGEEGVETALAATVHDRFELTNEASDLMYHLLVLLQDQDLDLTTVIENLRKRHQ</sequence>
<protein>
    <recommendedName>
        <fullName>Histidine biosynthesis bifunctional protein HisIE</fullName>
    </recommendedName>
    <domain>
        <recommendedName>
            <fullName>Phosphoribosyl-AMP cyclohydrolase</fullName>
            <shortName>PRA-CH</shortName>
            <ecNumber>3.5.4.19</ecNumber>
        </recommendedName>
    </domain>
    <domain>
        <recommendedName>
            <fullName>Phosphoribosyl-ATP pyrophosphatase</fullName>
            <shortName>PRA-PH</shortName>
            <ecNumber>3.6.1.31</ecNumber>
        </recommendedName>
    </domain>
</protein>
<dbReference type="EC" id="3.5.4.19"/>
<dbReference type="EC" id="3.6.1.31"/>
<dbReference type="EMBL" id="AB008676">
    <property type="protein sequence ID" value="BAA77739.1"/>
    <property type="molecule type" value="Genomic_DNA"/>
</dbReference>
<dbReference type="EMBL" id="AE005174">
    <property type="protein sequence ID" value="AAG57085.1"/>
    <property type="molecule type" value="Genomic_DNA"/>
</dbReference>
<dbReference type="EMBL" id="BA000007">
    <property type="protein sequence ID" value="BAB36250.1"/>
    <property type="molecule type" value="Genomic_DNA"/>
</dbReference>
<dbReference type="PIR" id="A85828">
    <property type="entry name" value="A85828"/>
</dbReference>
<dbReference type="PIR" id="C90982">
    <property type="entry name" value="C90982"/>
</dbReference>
<dbReference type="RefSeq" id="NP_310854.1">
    <property type="nucleotide sequence ID" value="NC_002695.1"/>
</dbReference>
<dbReference type="RefSeq" id="WP_000954872.1">
    <property type="nucleotide sequence ID" value="NZ_VOAI01000013.1"/>
</dbReference>
<dbReference type="SMR" id="Q9S5G3"/>
<dbReference type="STRING" id="155864.Z3188"/>
<dbReference type="GeneID" id="912426"/>
<dbReference type="GeneID" id="93775147"/>
<dbReference type="KEGG" id="ece:Z3188"/>
<dbReference type="KEGG" id="ecs:ECs_2827"/>
<dbReference type="PATRIC" id="fig|386585.9.peg.2962"/>
<dbReference type="eggNOG" id="COG0139">
    <property type="taxonomic scope" value="Bacteria"/>
</dbReference>
<dbReference type="eggNOG" id="COG0140">
    <property type="taxonomic scope" value="Bacteria"/>
</dbReference>
<dbReference type="HOGENOM" id="CLU_048577_3_1_6"/>
<dbReference type="OMA" id="ERSCFHQ"/>
<dbReference type="UniPathway" id="UPA00031">
    <property type="reaction ID" value="UER00007"/>
</dbReference>
<dbReference type="UniPathway" id="UPA00031">
    <property type="reaction ID" value="UER00008"/>
</dbReference>
<dbReference type="Proteomes" id="UP000000558">
    <property type="component" value="Chromosome"/>
</dbReference>
<dbReference type="Proteomes" id="UP000002519">
    <property type="component" value="Chromosome"/>
</dbReference>
<dbReference type="GO" id="GO:0005737">
    <property type="term" value="C:cytoplasm"/>
    <property type="evidence" value="ECO:0007669"/>
    <property type="project" value="UniProtKB-SubCell"/>
</dbReference>
<dbReference type="GO" id="GO:0005524">
    <property type="term" value="F:ATP binding"/>
    <property type="evidence" value="ECO:0007669"/>
    <property type="project" value="UniProtKB-KW"/>
</dbReference>
<dbReference type="GO" id="GO:0004635">
    <property type="term" value="F:phosphoribosyl-AMP cyclohydrolase activity"/>
    <property type="evidence" value="ECO:0007669"/>
    <property type="project" value="UniProtKB-UniRule"/>
</dbReference>
<dbReference type="GO" id="GO:0004636">
    <property type="term" value="F:phosphoribosyl-ATP diphosphatase activity"/>
    <property type="evidence" value="ECO:0007669"/>
    <property type="project" value="UniProtKB-UniRule"/>
</dbReference>
<dbReference type="GO" id="GO:0000105">
    <property type="term" value="P:L-histidine biosynthetic process"/>
    <property type="evidence" value="ECO:0007669"/>
    <property type="project" value="UniProtKB-UniRule"/>
</dbReference>
<dbReference type="CDD" id="cd11534">
    <property type="entry name" value="NTP-PPase_HisIE_like"/>
    <property type="match status" value="1"/>
</dbReference>
<dbReference type="FunFam" id="1.10.287.1080:FF:000002">
    <property type="entry name" value="Histidine biosynthesis bifunctional protein HisIE"/>
    <property type="match status" value="1"/>
</dbReference>
<dbReference type="FunFam" id="3.10.20.810:FF:000001">
    <property type="entry name" value="Histidine biosynthesis bifunctional protein HisIE"/>
    <property type="match status" value="1"/>
</dbReference>
<dbReference type="Gene3D" id="1.10.287.1080">
    <property type="entry name" value="MazG-like"/>
    <property type="match status" value="1"/>
</dbReference>
<dbReference type="Gene3D" id="3.10.20.810">
    <property type="entry name" value="Phosphoribosyl-AMP cyclohydrolase"/>
    <property type="match status" value="1"/>
</dbReference>
<dbReference type="HAMAP" id="MF_01020">
    <property type="entry name" value="HisE"/>
    <property type="match status" value="1"/>
</dbReference>
<dbReference type="HAMAP" id="MF_01019">
    <property type="entry name" value="HisIE"/>
    <property type="match status" value="1"/>
</dbReference>
<dbReference type="InterPro" id="IPR023019">
    <property type="entry name" value="His_synth_HisIE"/>
</dbReference>
<dbReference type="InterPro" id="IPR008179">
    <property type="entry name" value="HisE"/>
</dbReference>
<dbReference type="InterPro" id="IPR021130">
    <property type="entry name" value="PRib-ATP_PPHydrolase-like"/>
</dbReference>
<dbReference type="InterPro" id="IPR002496">
    <property type="entry name" value="PRib_AMP_CycHydrolase_dom"/>
</dbReference>
<dbReference type="InterPro" id="IPR038019">
    <property type="entry name" value="PRib_AMP_CycHydrolase_sf"/>
</dbReference>
<dbReference type="NCBIfam" id="TIGR03188">
    <property type="entry name" value="histidine_hisI"/>
    <property type="match status" value="1"/>
</dbReference>
<dbReference type="NCBIfam" id="NF000768">
    <property type="entry name" value="PRK00051.1"/>
    <property type="match status" value="1"/>
</dbReference>
<dbReference type="NCBIfam" id="NF002747">
    <property type="entry name" value="PRK02759.1"/>
    <property type="match status" value="1"/>
</dbReference>
<dbReference type="PANTHER" id="PTHR42945">
    <property type="entry name" value="HISTIDINE BIOSYNTHESIS BIFUNCTIONAL PROTEIN"/>
    <property type="match status" value="1"/>
</dbReference>
<dbReference type="PANTHER" id="PTHR42945:SF9">
    <property type="entry name" value="HISTIDINE BIOSYNTHESIS BIFUNCTIONAL PROTEIN HISIE"/>
    <property type="match status" value="1"/>
</dbReference>
<dbReference type="Pfam" id="PF01502">
    <property type="entry name" value="PRA-CH"/>
    <property type="match status" value="1"/>
</dbReference>
<dbReference type="Pfam" id="PF01503">
    <property type="entry name" value="PRA-PH"/>
    <property type="match status" value="1"/>
</dbReference>
<dbReference type="SUPFAM" id="SSF101386">
    <property type="entry name" value="all-alpha NTP pyrophosphatases"/>
    <property type="match status" value="1"/>
</dbReference>
<dbReference type="SUPFAM" id="SSF141734">
    <property type="entry name" value="HisI-like"/>
    <property type="match status" value="1"/>
</dbReference>